<sequence length="251" mass="27544">MTEAQRHQILLEMLAQLGFVTVEKVVERLGISPATARRDINKLGESGKLKKVRNGAEAITQQRPRWTPMNLHQAQNHDEKVRIAKAASQLVNPGESVVINCGSTAFLLGREMCGKPVQIITNYLPLANYLIDQEHDSVIIMGGQYNKSQSITLSPQGSENSLYAGHWMFTSGKGLTAEGLYKTDMLTAMAEQKMLSVVGKLVVLVDSSKIGERAGMLFSRADQIDMLITGKNANPEILQQLEAQGVSILRV</sequence>
<protein>
    <recommendedName>
        <fullName evidence="1">HTH-type transcriptional regulator UlaR</fullName>
    </recommendedName>
</protein>
<comment type="function">
    <text evidence="1">Represses ulaG and the ulaABCDEF operon.</text>
</comment>
<comment type="subcellular location">
    <subcellularLocation>
        <location evidence="1">Cytoplasm</location>
    </subcellularLocation>
</comment>
<name>ULAR_SHIF8</name>
<keyword id="KW-0963">Cytoplasm</keyword>
<keyword id="KW-0238">DNA-binding</keyword>
<keyword id="KW-0678">Repressor</keyword>
<keyword id="KW-0804">Transcription</keyword>
<keyword id="KW-0805">Transcription regulation</keyword>
<reference key="1">
    <citation type="journal article" date="2006" name="BMC Genomics">
        <title>Complete genome sequence of Shigella flexneri 5b and comparison with Shigella flexneri 2a.</title>
        <authorList>
            <person name="Nie H."/>
            <person name="Yang F."/>
            <person name="Zhang X."/>
            <person name="Yang J."/>
            <person name="Chen L."/>
            <person name="Wang J."/>
            <person name="Xiong Z."/>
            <person name="Peng J."/>
            <person name="Sun L."/>
            <person name="Dong J."/>
            <person name="Xue Y."/>
            <person name="Xu X."/>
            <person name="Chen S."/>
            <person name="Yao Z."/>
            <person name="Shen Y."/>
            <person name="Jin Q."/>
        </authorList>
    </citation>
    <scope>NUCLEOTIDE SEQUENCE [LARGE SCALE GENOMIC DNA]</scope>
    <source>
        <strain>8401</strain>
    </source>
</reference>
<organism>
    <name type="scientific">Shigella flexneri serotype 5b (strain 8401)</name>
    <dbReference type="NCBI Taxonomy" id="373384"/>
    <lineage>
        <taxon>Bacteria</taxon>
        <taxon>Pseudomonadati</taxon>
        <taxon>Pseudomonadota</taxon>
        <taxon>Gammaproteobacteria</taxon>
        <taxon>Enterobacterales</taxon>
        <taxon>Enterobacteriaceae</taxon>
        <taxon>Shigella</taxon>
    </lineage>
</organism>
<accession>Q0SX94</accession>
<dbReference type="EMBL" id="CP000266">
    <property type="protein sequence ID" value="ABF06321.1"/>
    <property type="molecule type" value="Genomic_DNA"/>
</dbReference>
<dbReference type="RefSeq" id="WP_000133645.1">
    <property type="nucleotide sequence ID" value="NC_008258.1"/>
</dbReference>
<dbReference type="SMR" id="Q0SX94"/>
<dbReference type="KEGG" id="sfv:SFV_4347"/>
<dbReference type="HOGENOM" id="CLU_060699_3_2_6"/>
<dbReference type="Proteomes" id="UP000000659">
    <property type="component" value="Chromosome"/>
</dbReference>
<dbReference type="GO" id="GO:0005737">
    <property type="term" value="C:cytoplasm"/>
    <property type="evidence" value="ECO:0007669"/>
    <property type="project" value="UniProtKB-SubCell"/>
</dbReference>
<dbReference type="GO" id="GO:0003677">
    <property type="term" value="F:DNA binding"/>
    <property type="evidence" value="ECO:0007669"/>
    <property type="project" value="UniProtKB-KW"/>
</dbReference>
<dbReference type="GO" id="GO:0003700">
    <property type="term" value="F:DNA-binding transcription factor activity"/>
    <property type="evidence" value="ECO:0007669"/>
    <property type="project" value="InterPro"/>
</dbReference>
<dbReference type="GO" id="GO:0045892">
    <property type="term" value="P:negative regulation of DNA-templated transcription"/>
    <property type="evidence" value="ECO:0007669"/>
    <property type="project" value="UniProtKB-UniRule"/>
</dbReference>
<dbReference type="FunFam" id="1.10.10.10:FF:000160">
    <property type="entry name" value="HTH-type transcriptional regulator UlaR"/>
    <property type="match status" value="1"/>
</dbReference>
<dbReference type="Gene3D" id="1.10.10.10">
    <property type="entry name" value="Winged helix-like DNA-binding domain superfamily/Winged helix DNA-binding domain"/>
    <property type="match status" value="1"/>
</dbReference>
<dbReference type="HAMAP" id="MF_01563">
    <property type="entry name" value="HTH_type_UlaR"/>
    <property type="match status" value="1"/>
</dbReference>
<dbReference type="InterPro" id="IPR050313">
    <property type="entry name" value="Carb_Metab_HTH_regulators"/>
</dbReference>
<dbReference type="InterPro" id="IPR014036">
    <property type="entry name" value="DeoR-like_C"/>
</dbReference>
<dbReference type="InterPro" id="IPR001034">
    <property type="entry name" value="DeoR_HTH"/>
</dbReference>
<dbReference type="InterPro" id="IPR037171">
    <property type="entry name" value="NagB/RpiA_transferase-like"/>
</dbReference>
<dbReference type="InterPro" id="IPR018356">
    <property type="entry name" value="Tscrpt_reg_HTH_DeoR_CS"/>
</dbReference>
<dbReference type="InterPro" id="IPR023711">
    <property type="entry name" value="Tscrpt_reg_HTH_UlaR"/>
</dbReference>
<dbReference type="InterPro" id="IPR036388">
    <property type="entry name" value="WH-like_DNA-bd_sf"/>
</dbReference>
<dbReference type="InterPro" id="IPR036390">
    <property type="entry name" value="WH_DNA-bd_sf"/>
</dbReference>
<dbReference type="NCBIfam" id="NF010034">
    <property type="entry name" value="PRK13509.1"/>
    <property type="match status" value="1"/>
</dbReference>
<dbReference type="PANTHER" id="PTHR30363">
    <property type="entry name" value="HTH-TYPE TRANSCRIPTIONAL REGULATOR SRLR-RELATED"/>
    <property type="match status" value="1"/>
</dbReference>
<dbReference type="PANTHER" id="PTHR30363:SF55">
    <property type="entry name" value="HTH-TYPE TRANSCRIPTIONAL REGULATOR ULAR"/>
    <property type="match status" value="1"/>
</dbReference>
<dbReference type="Pfam" id="PF00455">
    <property type="entry name" value="DeoRC"/>
    <property type="match status" value="1"/>
</dbReference>
<dbReference type="Pfam" id="PF08220">
    <property type="entry name" value="HTH_DeoR"/>
    <property type="match status" value="1"/>
</dbReference>
<dbReference type="PRINTS" id="PR00037">
    <property type="entry name" value="HTHLACR"/>
</dbReference>
<dbReference type="SMART" id="SM01134">
    <property type="entry name" value="DeoRC"/>
    <property type="match status" value="1"/>
</dbReference>
<dbReference type="SMART" id="SM00420">
    <property type="entry name" value="HTH_DEOR"/>
    <property type="match status" value="1"/>
</dbReference>
<dbReference type="SUPFAM" id="SSF100950">
    <property type="entry name" value="NagB/RpiA/CoA transferase-like"/>
    <property type="match status" value="1"/>
</dbReference>
<dbReference type="SUPFAM" id="SSF46785">
    <property type="entry name" value="Winged helix' DNA-binding domain"/>
    <property type="match status" value="1"/>
</dbReference>
<dbReference type="PROSITE" id="PS00894">
    <property type="entry name" value="HTH_DEOR_1"/>
    <property type="match status" value="1"/>
</dbReference>
<dbReference type="PROSITE" id="PS51000">
    <property type="entry name" value="HTH_DEOR_2"/>
    <property type="match status" value="1"/>
</dbReference>
<gene>
    <name evidence="1" type="primary">ulaR</name>
    <name type="ordered locus">SFV_4347</name>
</gene>
<proteinExistence type="inferred from homology"/>
<feature type="chain" id="PRO_1000069051" description="HTH-type transcriptional regulator UlaR">
    <location>
        <begin position="1"/>
        <end position="251"/>
    </location>
</feature>
<feature type="domain" description="HTH deoR-type" evidence="1">
    <location>
        <begin position="3"/>
        <end position="58"/>
    </location>
</feature>
<feature type="DNA-binding region" description="H-T-H motif" evidence="1">
    <location>
        <begin position="20"/>
        <end position="39"/>
    </location>
</feature>
<evidence type="ECO:0000255" key="1">
    <source>
        <dbReference type="HAMAP-Rule" id="MF_01563"/>
    </source>
</evidence>